<protein>
    <recommendedName>
        <fullName evidence="24">Protein unc-13 homolog A</fullName>
    </recommendedName>
    <alternativeName>
        <fullName>Munc13-1</fullName>
    </alternativeName>
</protein>
<keyword id="KW-0002">3D-structure</keyword>
<keyword id="KW-0025">Alternative splicing</keyword>
<keyword id="KW-0106">Calcium</keyword>
<keyword id="KW-1003">Cell membrane</keyword>
<keyword id="KW-0966">Cell projection</keyword>
<keyword id="KW-0175">Coiled coil</keyword>
<keyword id="KW-0963">Cytoplasm</keyword>
<keyword id="KW-0221">Differentiation</keyword>
<keyword id="KW-0268">Exocytosis</keyword>
<keyword id="KW-0472">Membrane</keyword>
<keyword id="KW-0479">Metal-binding</keyword>
<keyword id="KW-0597">Phosphoprotein</keyword>
<keyword id="KW-1185">Reference proteome</keyword>
<keyword id="KW-0677">Repeat</keyword>
<keyword id="KW-0770">Synapse</keyword>
<keyword id="KW-0862">Zinc</keyword>
<keyword id="KW-0863">Zinc-finger</keyword>
<sequence length="1735" mass="196356">MSLLCVGVKKAKFDGAQEKFNTYVTLKVQNVKSTTIAVRGSQPSWEQDFMFEINRLDLGLTVEVWNKGLIWDTMVGTVWIPLRTIRQSNEEGPGEWLTLDSQAIMADSEICGTKDPTFHRILLDAHFELPLDIPEEEARYWAKKLEQLNAMRDQDEYSFQDQQDKPLPVPSSQCCNWNYFGWGEQNDDPDSAVDDRDSDYRSETSNSIPPPYYTTSQPNASVHQYSVRPPPLGSRESYSDSMHSYEEFSEPRALSPTGSSRYASSGELSQGSSQLSEDFDPDEHSLQGSELDDERDRDSYHSCHSSVSYHKDSPRWDQDEEDLEDLEDLEDEELPEEEELEEEELEEEEELEEEELELEEEEEVPDDLASYTQQEDTTVAEPKEFKRISFPTAAPQKEDKVSAVPIEAPDVSKGIPKAATPEEKAAAECAQEAEPPKSEESFRSREAEEGQEGQDAMSRAKANWLRAFNKVRMQLQEARGEGEMSKSLWFKGGPGGGLIIIDSMPDIRKRKPIPLVSDLAMSLVQSRKAGITSALASSTLNNEELKNHVYKKTLQALIYPISCTTPHNFEVWTATTPTYCYECEGLLWGIARQGMRCTECGVKCHEKCQDLLNADCLQRAAEKSSKHGAEDRTQNIIMVLKDRMKIRERNKPEIFELIQEVFAVTKSAHTQQMKAVKQSVLDGTSKWSAKISITVVCAQGLQAKDKTGSSDPYVTVQVGKTKKRTKTIYGNLNPVWEENFHFECHNSSDRIKVRVLDEDDDIKSRVKQRFKRESDDFLGQTIIEVRTLSGEMDVWYNLDKRTDKSAVSGAIRLHISVEIKGEEKVAPYHVQYTCLHENLFHFVTDVQNNGVVKIPDAKGDDAWKVYYDETAQEIVDEFAMRYGVESIYQAMTHFACLSSKYMCPGVPAVMSTLLANINAYYAHTTASTNVSASDRFAASNFGKERFVKLLDQLHNSLRIDLSMYRNNFPASSPERLQDLKSTVDLLTSITFFRMKVQELQSPPRASQVVKDCVKACLNSTYEYIFNNCHELYGREYQTDPAKKGEVPPEEQGPSIKNLDFWSKLITLIVSIIEEDKNSYTPCLNQFPQELNVGKISAEVMWSLFAQDMKYAMEEHDKHRLCKSADYMNLHFKVKWLYNEYVAELPTFKDRVPEYPAWFEPFVIQWLDENEEVSRDFLHGALERDKKDGFQQTSEHALFSCSVVDVFSQLNQSFEIIKKLECPDPQIVGHYMRRFAKTISNVLLQYADIVSKDFASYCSKEKEKVPCILMNNTQQLRVQLEKMFEAMGGKELDAEASGTLKELQVKLNNVLDELSHVFATSFQPHIEECVRQMGDILSQVKGTGNVPASACSSVAQDADNVLQPIMDLLDSNLTLFAKICEKTVLKRVLKELWKLVMNTMERTIVLPPLTDQTMIGTLLRKHGKGLEKGRVKLPSHSDGTQMIFNAAKELGQLSKLKDHMVREEAKSLTPKQCAVVELALDTIKQYFHAGGVGLKKTFLEKSPDLQSLRYALSLYTQATDLLIKTFVQTQSAQVHGGKGTRFTLSEDVCPEMGSGVEDPVGEVSVHVELFTHPGTGEQKVTVKVVAANDLKWQTSGIFRPFIEVNIVGPQLSDKKRKFATKSKNNSWAPKYNESFQFSLSADAGPECYELQVCVKDYCFAREDRTVELAVLQLRELAQRGSAACWLPLGRRIHMDDTGLTVLRILSQRSNDEVAKEFVKLKSDTRSAEEGGAAPAP</sequence>
<name>UN13A_RAT</name>
<gene>
    <name evidence="25" type="primary">Unc13a</name>
    <name type="synonym">Unc13h1</name>
</gene>
<proteinExistence type="evidence at protein level"/>
<reference key="1">
    <citation type="journal article" date="1995" name="J. Biol. Chem.">
        <title>Mammalian homologues of Caenorhabditis elegans unc-13 gene define novel family of C2-domain proteins.</title>
        <authorList>
            <person name="Brose N."/>
            <person name="Hofmann K."/>
            <person name="Hata Y."/>
            <person name="Suedhof T.C."/>
        </authorList>
    </citation>
    <scope>NUCLEOTIDE SEQUENCE [MRNA] (ISOFORM 1)</scope>
    <scope>ALTERNATIVE SPLICING</scope>
    <scope>SUBCELLULAR LOCATION</scope>
    <scope>TISSUE SPECIFICITY</scope>
    <source>
        <tissue>Brain</tissue>
    </source>
</reference>
<reference key="2">
    <citation type="journal article" date="1997" name="J. Biol. Chem.">
        <title>Direct interaction of the rat unc-13 homologue Munc13-1 with the N terminus of syntaxin.</title>
        <authorList>
            <person name="Betz A."/>
            <person name="Okamoto M."/>
            <person name="Benseler F."/>
            <person name="Brose N."/>
        </authorList>
    </citation>
    <scope>INTERACTION WITH SYNTAXIN 1</scope>
</reference>
<reference key="3">
    <citation type="journal article" date="1997" name="J. Biol. Chem.">
        <title>Physical and functional interactions of Doc2 and Munc13 in Ca2+-dependent exocytotic machinery.</title>
        <authorList>
            <person name="Orita S."/>
            <person name="Naito A."/>
            <person name="Sakaguchi G."/>
            <person name="Maeda M."/>
            <person name="Igarashi H."/>
            <person name="Sasaki T."/>
            <person name="Takai Y."/>
        </authorList>
    </citation>
    <scope>INTERACTION WITH DOC2A</scope>
</reference>
<reference key="4">
    <citation type="journal article" date="1998" name="Neuron">
        <title>Munc13-1 is a presynaptic phorbol ester receptor that enhances neurotransmitter release.</title>
        <authorList>
            <person name="Betz A."/>
            <person name="Ashery U."/>
            <person name="Rickmann M."/>
            <person name="Augustin I."/>
            <person name="Neher E."/>
            <person name="Suedhof T.C."/>
            <person name="Rettig J."/>
            <person name="Brose N."/>
        </authorList>
    </citation>
    <scope>FUNCTION</scope>
    <scope>SUBCELLULAR LOCATION</scope>
    <scope>MUTAGENESIS OF HIS-567</scope>
</reference>
<reference key="5">
    <citation type="journal article" date="1998" name="Proc. Natl. Acad. Sci. U.S.A.">
        <title>Role of the Doc2 alpha-Munc13-1 interaction in the neurotransmitter release process.</title>
        <authorList>
            <person name="Mochida S."/>
            <person name="Orita S."/>
            <person name="Sakaguchi G."/>
            <person name="Sasaki T."/>
            <person name="Takai Y."/>
        </authorList>
    </citation>
    <scope>INTERACTION WITH DOC2A</scope>
</reference>
<reference key="6">
    <citation type="journal article" date="1999" name="Biochem. J.">
        <title>Differential expression of two novel Munc13 proteins in rat brain.</title>
        <authorList>
            <person name="Augustin I."/>
            <person name="Betz A."/>
            <person name="Herrmann C."/>
            <person name="Jo T."/>
            <person name="Brose N."/>
        </authorList>
    </citation>
    <scope>TISSUE SPECIFICITY</scope>
    <scope>DEVELOPMENTAL STAGE</scope>
</reference>
<reference key="7">
    <citation type="journal article" date="2001" name="Neuron">
        <title>Functional interaction of the active zone proteins Munc13-1 and RIM1 in synaptic vesicle priming.</title>
        <authorList>
            <person name="Betz A."/>
            <person name="Thakur P."/>
            <person name="Junge H.J."/>
            <person name="Ashery U."/>
            <person name="Rhee J.S."/>
            <person name="Scheuss V."/>
            <person name="Rosenmund C."/>
            <person name="Rettig J."/>
            <person name="Brose N."/>
        </authorList>
    </citation>
    <scope>FUNCTION</scope>
    <scope>INTERACTION WITH RIMS1</scope>
</reference>
<reference key="8">
    <citation type="journal article" date="2002" name="Cell">
        <title>Beta phorbol ester- and diacylglycerol-induced augmentation of transmitter release is mediated by Munc13s and not by PKCs.</title>
        <authorList>
            <person name="Rhee J.S."/>
            <person name="Betz A."/>
            <person name="Pyott S."/>
            <person name="Reim K."/>
            <person name="Varoqueaux F."/>
            <person name="Augustin I."/>
            <person name="Hesse D."/>
            <person name="Suedhof T.C."/>
            <person name="Takahashi M."/>
            <person name="Rosenmund C."/>
            <person name="Brose N."/>
        </authorList>
    </citation>
    <scope>FUNCTION</scope>
</reference>
<reference key="9">
    <citation type="journal article" date="2002" name="J. Cell Biol.">
        <title>Cast: a novel protein of the cytomatrix at the active zone of synapses that forms a ternary complex with RIM1 and Munc13-1.</title>
        <authorList>
            <person name="Ohtsuka T."/>
            <person name="Takao-Rikitsu E."/>
            <person name="Inoue E."/>
            <person name="Inoue M."/>
            <person name="Takeuchi M."/>
            <person name="Matsubara K."/>
            <person name="Deguchi-Tawarada M."/>
            <person name="Satoh K."/>
            <person name="Morimoto K."/>
            <person name="Nakanishi H."/>
            <person name="Takai Y."/>
        </authorList>
    </citation>
    <scope>INTERACTION WITH BSN</scope>
    <scope>IDENTIFICATION IN A COMPLEX WITH ERC2 AND RIMS1</scope>
</reference>
<reference key="10">
    <citation type="journal article" date="2003" name="J. Biol. Chem.">
        <title>Regulation of insulin exocytosis by Munc13-1.</title>
        <authorList>
            <person name="Sheu L."/>
            <person name="Pasyk E.A."/>
            <person name="Ji J."/>
            <person name="Huang X."/>
            <person name="Gao X."/>
            <person name="Varoqueaux F."/>
            <person name="Brose N."/>
            <person name="Gaisano H.Y."/>
        </authorList>
    </citation>
    <scope>TISSUE SPECIFICITY</scope>
</reference>
<reference key="11">
    <citation type="journal article" date="2004" name="J. Cell Biol.">
        <title>Physical and functional interaction of the active zone proteins, CAST, RIM1, and Bassoon, in neurotransmitter release.</title>
        <authorList>
            <person name="Takao-Rikitsu E."/>
            <person name="Mochida S."/>
            <person name="Inoue E."/>
            <person name="Deguchi-Tawarada M."/>
            <person name="Inoue M."/>
            <person name="Ohtsuka T."/>
            <person name="Takai Y."/>
        </authorList>
    </citation>
    <scope>INTERACTION WITH BSN</scope>
</reference>
<reference key="12">
    <citation type="journal article" date="2005" name="Curr. Biol.">
        <title>Identification of the minimal protein domain required for priming activity of Munc13-1.</title>
        <authorList>
            <person name="Stevens D.R."/>
            <person name="Wu Z.-X."/>
            <person name="Matti U."/>
            <person name="Junge H.J."/>
            <person name="Schirra C."/>
            <person name="Becherer U."/>
            <person name="Wojcik S.M."/>
            <person name="Brose N."/>
            <person name="Rettig J."/>
        </authorList>
    </citation>
    <scope>DOMAIN</scope>
    <scope>MUTAGENESIS OF GLN-1190; LEU-1279; ILE-1364; VAL-1603 AND ASP-1655</scope>
</reference>
<reference key="13">
    <citation type="journal article" date="2005" name="EMBO J.">
        <title>A Munc13/RIM/Rab3 tripartite complex: from priming to plasticity?</title>
        <authorList>
            <person name="Dulubova I."/>
            <person name="Lou X."/>
            <person name="Lu J."/>
            <person name="Huryeva I."/>
            <person name="Alam A."/>
            <person name="Schneggenburger R."/>
            <person name="Suedhof T.C."/>
            <person name="Rizo J."/>
        </authorList>
    </citation>
    <scope>INTERACTION WITH RIMS2</scope>
</reference>
<reference key="14">
    <citation type="journal article" date="2006" name="J. Biol. Chem.">
        <title>Binding to Rab3A-interacting molecule RIM regulates the presynaptic recruitment of Munc13-1 and ubMunc13-2.</title>
        <authorList>
            <person name="Andrews-Zwilling Y.S."/>
            <person name="Kawabe H."/>
            <person name="Reim K."/>
            <person name="Varoqueaux F."/>
            <person name="Brose N."/>
        </authorList>
    </citation>
    <scope>INTERACTION WITH RIMS1</scope>
    <scope>MUTAGENESIS OF THR-22; TYR-23; VAL-64; HIS-119 AND ILE-121</scope>
</reference>
<reference key="15">
    <citation type="journal article" date="2012" name="Nat. Commun.">
        <title>Quantitative maps of protein phosphorylation sites across 14 different rat organs and tissues.</title>
        <authorList>
            <person name="Lundby A."/>
            <person name="Secher A."/>
            <person name="Lage K."/>
            <person name="Nordsborg N.B."/>
            <person name="Dmytriyev A."/>
            <person name="Lundby C."/>
            <person name="Olsen J.V."/>
        </authorList>
    </citation>
    <scope>PHOSPHORYLATION [LARGE SCALE ANALYSIS] AT SER-239; SER-241; SER-244 AND SER-255</scope>
    <scope>IDENTIFICATION BY MASS SPECTROMETRY [LARGE SCALE ANALYSIS]</scope>
</reference>
<reference key="16">
    <citation type="journal article" date="2005" name="Biochemistry">
        <title>Intramolecular occlusion of the diacylglycerol-binding site in the C1 domain of munc13-1.</title>
        <authorList>
            <person name="Shen N."/>
            <person name="Guryev O."/>
            <person name="Rizo J."/>
        </authorList>
    </citation>
    <scope>STRUCTURE BY NMR OF 567-616</scope>
</reference>
<reference key="17">
    <citation type="journal article" date="2006" name="PLoS Biol.">
        <title>Structural basis for a Munc13-1 homodimer to Munc13-1/RIM heterodimer switch.</title>
        <authorList>
            <person name="Lu J."/>
            <person name="Machius M."/>
            <person name="Dulubova I."/>
            <person name="Dai H."/>
            <person name="Suedhof T.C."/>
            <person name="Tomchick D.R."/>
            <person name="Rizo J."/>
        </authorList>
    </citation>
    <scope>X-RAY CRYSTALLOGRAPHY (1.44 ANGSTROMS) OF 1-128</scope>
    <scope>X-RAY CRYSTALLOGRAPHY (1.78 ANGSTROMS) OF 2-150 IN COMPLEX WITH RIMS2</scope>
</reference>
<evidence type="ECO:0000250" key="1">
    <source>
        <dbReference type="UniProtKB" id="Q4KUS2"/>
    </source>
</evidence>
<evidence type="ECO:0000250" key="2">
    <source>
        <dbReference type="UniProtKB" id="Q9UPW8"/>
    </source>
</evidence>
<evidence type="ECO:0000255" key="3"/>
<evidence type="ECO:0000255" key="4">
    <source>
        <dbReference type="PROSITE-ProRule" id="PRU00041"/>
    </source>
</evidence>
<evidence type="ECO:0000255" key="5">
    <source>
        <dbReference type="PROSITE-ProRule" id="PRU00226"/>
    </source>
</evidence>
<evidence type="ECO:0000255" key="6">
    <source>
        <dbReference type="PROSITE-ProRule" id="PRU00587"/>
    </source>
</evidence>
<evidence type="ECO:0000255" key="7">
    <source>
        <dbReference type="PROSITE-ProRule" id="PRU00588"/>
    </source>
</evidence>
<evidence type="ECO:0000256" key="8">
    <source>
        <dbReference type="SAM" id="MobiDB-lite"/>
    </source>
</evidence>
<evidence type="ECO:0000269" key="9">
    <source>
    </source>
</evidence>
<evidence type="ECO:0000269" key="10">
    <source>
    </source>
</evidence>
<evidence type="ECO:0000269" key="11">
    <source>
    </source>
</evidence>
<evidence type="ECO:0000269" key="12">
    <source>
    </source>
</evidence>
<evidence type="ECO:0000269" key="13">
    <source>
    </source>
</evidence>
<evidence type="ECO:0000269" key="14">
    <source>
    </source>
</evidence>
<evidence type="ECO:0000269" key="15">
    <source>
    </source>
</evidence>
<evidence type="ECO:0000269" key="16">
    <source>
    </source>
</evidence>
<evidence type="ECO:0000269" key="17">
    <source>
    </source>
</evidence>
<evidence type="ECO:0000269" key="18">
    <source>
    </source>
</evidence>
<evidence type="ECO:0000269" key="19">
    <source>
    </source>
</evidence>
<evidence type="ECO:0000269" key="20">
    <source>
    </source>
</evidence>
<evidence type="ECO:0000269" key="21">
    <source>
    </source>
</evidence>
<evidence type="ECO:0000269" key="22">
    <source>
    </source>
</evidence>
<evidence type="ECO:0000269" key="23">
    <source>
    </source>
</evidence>
<evidence type="ECO:0000305" key="24"/>
<evidence type="ECO:0000312" key="25">
    <source>
        <dbReference type="RGD" id="619722"/>
    </source>
</evidence>
<evidence type="ECO:0007744" key="26">
    <source>
    </source>
</evidence>
<evidence type="ECO:0007829" key="27">
    <source>
        <dbReference type="PDB" id="2CJS"/>
    </source>
</evidence>
<evidence type="ECO:0007829" key="28">
    <source>
        <dbReference type="PDB" id="2CJT"/>
    </source>
</evidence>
<evidence type="ECO:0007829" key="29">
    <source>
        <dbReference type="PDB" id="2KDU"/>
    </source>
</evidence>
<evidence type="ECO:0007829" key="30">
    <source>
        <dbReference type="PDB" id="3SWH"/>
    </source>
</evidence>
<evidence type="ECO:0007829" key="31">
    <source>
        <dbReference type="PDB" id="4Y21"/>
    </source>
</evidence>
<evidence type="ECO:0007829" key="32">
    <source>
        <dbReference type="PDB" id="5UE8"/>
    </source>
</evidence>
<evidence type="ECO:0007829" key="33">
    <source>
        <dbReference type="PDB" id="6A30"/>
    </source>
</evidence>
<evidence type="ECO:0007829" key="34">
    <source>
        <dbReference type="PDB" id="6NYT"/>
    </source>
</evidence>
<feature type="chain" id="PRO_0000188574" description="Protein unc-13 homolog A">
    <location>
        <begin position="1"/>
        <end position="1735"/>
    </location>
</feature>
<feature type="domain" description="C2 1" evidence="4">
    <location>
        <begin position="1"/>
        <end position="97"/>
    </location>
</feature>
<feature type="domain" description="C2 2" evidence="4">
    <location>
        <begin position="672"/>
        <end position="796"/>
    </location>
</feature>
<feature type="domain" description="MHD1" evidence="6">
    <location>
        <begin position="1106"/>
        <end position="1249"/>
    </location>
</feature>
<feature type="domain" description="MHD2" evidence="7">
    <location>
        <begin position="1358"/>
        <end position="1525"/>
    </location>
</feature>
<feature type="domain" description="C2 3" evidence="4">
    <location>
        <begin position="1558"/>
        <end position="1685"/>
    </location>
</feature>
<feature type="zinc finger region" description="Phorbol-ester/DAG-type" evidence="5">
    <location>
        <begin position="566"/>
        <end position="616"/>
    </location>
</feature>
<feature type="region of interest" description="Disordered" evidence="8">
    <location>
        <begin position="185"/>
        <end position="458"/>
    </location>
</feature>
<feature type="coiled-coil region" evidence="3">
    <location>
        <begin position="319"/>
        <end position="370"/>
    </location>
</feature>
<feature type="compositionally biased region" description="Basic and acidic residues" evidence="8">
    <location>
        <begin position="193"/>
        <end position="202"/>
    </location>
</feature>
<feature type="compositionally biased region" description="Polar residues" evidence="8">
    <location>
        <begin position="203"/>
        <end position="224"/>
    </location>
</feature>
<feature type="compositionally biased region" description="Low complexity" evidence="8">
    <location>
        <begin position="264"/>
        <end position="276"/>
    </location>
</feature>
<feature type="compositionally biased region" description="Acidic residues" evidence="8">
    <location>
        <begin position="318"/>
        <end position="366"/>
    </location>
</feature>
<feature type="compositionally biased region" description="Basic and acidic residues" evidence="8">
    <location>
        <begin position="434"/>
        <end position="448"/>
    </location>
</feature>
<feature type="binding site">
    <location>
        <position position="580"/>
    </location>
    <ligand>
        <name>Zn(2+)</name>
        <dbReference type="ChEBI" id="CHEBI:29105"/>
        <label>1</label>
    </ligand>
</feature>
<feature type="binding site">
    <location>
        <position position="583"/>
    </location>
    <ligand>
        <name>Zn(2+)</name>
        <dbReference type="ChEBI" id="CHEBI:29105"/>
        <label>1</label>
    </ligand>
</feature>
<feature type="binding site">
    <location>
        <position position="597"/>
    </location>
    <ligand>
        <name>Zn(2+)</name>
        <dbReference type="ChEBI" id="CHEBI:29105"/>
        <label>2</label>
    </ligand>
</feature>
<feature type="binding site">
    <location>
        <position position="600"/>
    </location>
    <ligand>
        <name>Zn(2+)</name>
        <dbReference type="ChEBI" id="CHEBI:29105"/>
        <label>2</label>
    </ligand>
</feature>
<feature type="binding site">
    <location>
        <position position="608"/>
    </location>
    <ligand>
        <name>Zn(2+)</name>
        <dbReference type="ChEBI" id="CHEBI:29105"/>
        <label>1</label>
    </ligand>
</feature>
<feature type="binding site">
    <location>
        <position position="616"/>
    </location>
    <ligand>
        <name>Zn(2+)</name>
        <dbReference type="ChEBI" id="CHEBI:29105"/>
        <label>2</label>
    </ligand>
</feature>
<feature type="binding site" evidence="4">
    <location>
        <position position="705"/>
    </location>
    <ligand>
        <name>Ca(2+)</name>
        <dbReference type="ChEBI" id="CHEBI:29108"/>
        <label>1</label>
    </ligand>
</feature>
<feature type="binding site" evidence="4">
    <location>
        <position position="705"/>
    </location>
    <ligand>
        <name>Ca(2+)</name>
        <dbReference type="ChEBI" id="CHEBI:29108"/>
        <label>2</label>
    </ligand>
</feature>
<feature type="binding site" evidence="4">
    <location>
        <position position="711"/>
    </location>
    <ligand>
        <name>Ca(2+)</name>
        <dbReference type="ChEBI" id="CHEBI:29108"/>
        <label>1</label>
    </ligand>
</feature>
<feature type="binding site" evidence="4">
    <location>
        <position position="757"/>
    </location>
    <ligand>
        <name>Ca(2+)</name>
        <dbReference type="ChEBI" id="CHEBI:29108"/>
        <label>1</label>
    </ligand>
</feature>
<feature type="binding site" evidence="4">
    <location>
        <position position="757"/>
    </location>
    <ligand>
        <name>Ca(2+)</name>
        <dbReference type="ChEBI" id="CHEBI:29108"/>
        <label>2</label>
    </ligand>
</feature>
<feature type="binding site" evidence="4">
    <location>
        <position position="759"/>
    </location>
    <ligand>
        <name>Ca(2+)</name>
        <dbReference type="ChEBI" id="CHEBI:29108"/>
        <label>1</label>
    </ligand>
</feature>
<feature type="binding site" evidence="4">
    <location>
        <position position="759"/>
    </location>
    <ligand>
        <name>Ca(2+)</name>
        <dbReference type="ChEBI" id="CHEBI:29108"/>
        <label>2</label>
    </ligand>
</feature>
<feature type="binding site" evidence="4">
    <location>
        <position position="776"/>
    </location>
    <ligand>
        <name>Ca(2+)</name>
        <dbReference type="ChEBI" id="CHEBI:29108"/>
        <label>2</label>
    </ligand>
</feature>
<feature type="modified residue" description="Phosphoserine" evidence="26">
    <location>
        <position position="239"/>
    </location>
</feature>
<feature type="modified residue" description="Phosphoserine" evidence="26">
    <location>
        <position position="241"/>
    </location>
</feature>
<feature type="modified residue" description="Phosphoserine" evidence="26">
    <location>
        <position position="244"/>
    </location>
</feature>
<feature type="modified residue" description="Phosphoserine" evidence="26">
    <location>
        <position position="255"/>
    </location>
</feature>
<feature type="splice variant" id="VSP_011382" description="In isoform 2." evidence="24">
    <location>
        <begin position="1434"/>
        <end position="1456"/>
    </location>
</feature>
<feature type="splice variant" id="VSP_011383" description="In isoform 3." evidence="24">
    <location>
        <begin position="1541"/>
        <end position="1559"/>
    </location>
</feature>
<feature type="mutagenesis site" description="No effect on binding to RIMS1." evidence="16">
    <original>T</original>
    <variation>I</variation>
    <location>
        <position position="22"/>
    </location>
</feature>
<feature type="mutagenesis site" description="No effect on binding to RIMS1." evidence="16">
    <original>Y</original>
    <variation>N</variation>
    <location>
        <position position="23"/>
    </location>
</feature>
<feature type="mutagenesis site" description="No effect on binding to RIMS1." evidence="16">
    <original>V</original>
    <variation>M</variation>
    <location>
        <position position="64"/>
    </location>
</feature>
<feature type="mutagenesis site" description="No effect on binding to RIMS1." evidence="16">
    <original>H</original>
    <variation>R</variation>
    <location>
        <position position="119"/>
    </location>
</feature>
<feature type="mutagenesis site" description="Abolishes binding to RIMS1." evidence="16">
    <original>I</original>
    <variation>N</variation>
    <location>
        <position position="121"/>
    </location>
</feature>
<feature type="mutagenesis site" description="Loss of phorbol-ester binding." evidence="21">
    <original>H</original>
    <variation>K</variation>
    <location>
        <position position="567"/>
    </location>
</feature>
<feature type="mutagenesis site" description="Loss of binding to STX1B and priming activity; when associated with P-1279 and E-1655." evidence="15">
    <original>Q</original>
    <variation>R</variation>
    <location>
        <position position="1190"/>
    </location>
</feature>
<feature type="mutagenesis site" description="Loss of binding to STX1B and priming activity; when associated with R-1190 and E-1655." evidence="15">
    <original>L</original>
    <variation>P</variation>
    <location>
        <position position="1279"/>
    </location>
</feature>
<feature type="mutagenesis site" description="Loss of binding to STX1B and priming activity." evidence="15">
    <original>I</original>
    <variation>F</variation>
    <location>
        <position position="1364"/>
    </location>
</feature>
<feature type="mutagenesis site" description="Loss of binding to STX1B and priming activity." evidence="15">
    <original>V</original>
    <variation>D</variation>
    <location>
        <position position="1603"/>
    </location>
</feature>
<feature type="mutagenesis site" description="Loss of binding to STX1B and priming activity; when associated with R-1190 and P-1279." evidence="15">
    <original>D</original>
    <variation>E</variation>
    <location>
        <position position="1655"/>
    </location>
</feature>
<feature type="strand" evidence="28">
    <location>
        <begin position="2"/>
        <end position="12"/>
    </location>
</feature>
<feature type="helix" evidence="28">
    <location>
        <begin position="17"/>
        <end position="19"/>
    </location>
</feature>
<feature type="strand" evidence="28">
    <location>
        <begin position="21"/>
        <end position="28"/>
    </location>
</feature>
<feature type="strand" evidence="28">
    <location>
        <begin position="31"/>
        <end position="34"/>
    </location>
</feature>
<feature type="strand" evidence="28">
    <location>
        <begin position="38"/>
        <end position="42"/>
    </location>
</feature>
<feature type="strand" evidence="28">
    <location>
        <begin position="44"/>
        <end position="53"/>
    </location>
</feature>
<feature type="strand" evidence="28">
    <location>
        <begin position="57"/>
        <end position="66"/>
    </location>
</feature>
<feature type="strand" evidence="28">
    <location>
        <begin position="72"/>
        <end position="81"/>
    </location>
</feature>
<feature type="helix" evidence="28">
    <location>
        <begin position="82"/>
        <end position="84"/>
    </location>
</feature>
<feature type="strand" evidence="28">
    <location>
        <begin position="95"/>
        <end position="98"/>
    </location>
</feature>
<feature type="strand" evidence="28">
    <location>
        <begin position="102"/>
        <end position="106"/>
    </location>
</feature>
<feature type="strand" evidence="28">
    <location>
        <begin position="109"/>
        <end position="111"/>
    </location>
</feature>
<feature type="strand" evidence="28">
    <location>
        <begin position="120"/>
        <end position="128"/>
    </location>
</feature>
<feature type="helix" evidence="27">
    <location>
        <begin position="135"/>
        <end position="150"/>
    </location>
</feature>
<feature type="helix" evidence="29">
    <location>
        <begin position="459"/>
        <end position="478"/>
    </location>
</feature>
<feature type="helix" evidence="29">
    <location>
        <begin position="487"/>
        <end position="490"/>
    </location>
</feature>
<feature type="helix" evidence="32">
    <location>
        <begin position="544"/>
        <end position="558"/>
    </location>
</feature>
<feature type="strand" evidence="32">
    <location>
        <begin position="569"/>
        <end position="572"/>
    </location>
</feature>
<feature type="strand" evidence="32">
    <location>
        <begin position="581"/>
        <end position="583"/>
    </location>
</feature>
<feature type="helix" evidence="32">
    <location>
        <begin position="590"/>
        <end position="592"/>
    </location>
</feature>
<feature type="strand" evidence="32">
    <location>
        <begin position="594"/>
        <end position="597"/>
    </location>
</feature>
<feature type="turn" evidence="32">
    <location>
        <begin position="598"/>
        <end position="600"/>
    </location>
</feature>
<feature type="turn" evidence="32">
    <location>
        <begin position="606"/>
        <end position="608"/>
    </location>
</feature>
<feature type="helix" evidence="32">
    <location>
        <begin position="609"/>
        <end position="611"/>
    </location>
</feature>
<feature type="helix" evidence="32">
    <location>
        <begin position="616"/>
        <end position="627"/>
    </location>
</feature>
<feature type="helix" evidence="32">
    <location>
        <begin position="630"/>
        <end position="650"/>
    </location>
</feature>
<feature type="helix" evidence="32">
    <location>
        <begin position="653"/>
        <end position="661"/>
    </location>
</feature>
<feature type="helix" evidence="32">
    <location>
        <begin position="666"/>
        <end position="680"/>
    </location>
</feature>
<feature type="strand" evidence="34">
    <location>
        <begin position="689"/>
        <end position="700"/>
    </location>
</feature>
<feature type="strand" evidence="34">
    <location>
        <begin position="712"/>
        <end position="718"/>
    </location>
</feature>
<feature type="strand" evidence="34">
    <location>
        <begin position="721"/>
        <end position="724"/>
    </location>
</feature>
<feature type="strand" evidence="34">
    <location>
        <begin position="735"/>
        <end position="744"/>
    </location>
</feature>
<feature type="strand" evidence="32">
    <location>
        <begin position="746"/>
        <end position="748"/>
    </location>
</feature>
<feature type="strand" evidence="34">
    <location>
        <begin position="750"/>
        <end position="757"/>
    </location>
</feature>
<feature type="helix" evidence="34">
    <location>
        <begin position="762"/>
        <end position="767"/>
    </location>
</feature>
<feature type="turn" evidence="34">
    <location>
        <begin position="768"/>
        <end position="770"/>
    </location>
</feature>
<feature type="strand" evidence="34">
    <location>
        <begin position="774"/>
        <end position="784"/>
    </location>
</feature>
<feature type="helix" evidence="34">
    <location>
        <begin position="785"/>
        <end position="787"/>
    </location>
</feature>
<feature type="strand" evidence="34">
    <location>
        <begin position="790"/>
        <end position="797"/>
    </location>
</feature>
<feature type="strand" evidence="34">
    <location>
        <begin position="810"/>
        <end position="818"/>
    </location>
</feature>
<feature type="helix" evidence="32">
    <location>
        <begin position="828"/>
        <end position="843"/>
    </location>
</feature>
<feature type="turn" evidence="32">
    <location>
        <begin position="844"/>
        <end position="850"/>
    </location>
</feature>
<feature type="turn" evidence="32">
    <location>
        <begin position="869"/>
        <end position="871"/>
    </location>
</feature>
<feature type="helix" evidence="32">
    <location>
        <begin position="872"/>
        <end position="880"/>
    </location>
</feature>
<feature type="turn" evidence="32">
    <location>
        <begin position="881"/>
        <end position="883"/>
    </location>
</feature>
<feature type="helix" evidence="32">
    <location>
        <begin position="886"/>
        <end position="897"/>
    </location>
</feature>
<feature type="helix" evidence="32">
    <location>
        <begin position="898"/>
        <end position="900"/>
    </location>
</feature>
<feature type="strand" evidence="32">
    <location>
        <begin position="901"/>
        <end position="903"/>
    </location>
</feature>
<feature type="helix" evidence="32">
    <location>
        <begin position="906"/>
        <end position="920"/>
    </location>
</feature>
<feature type="helix" evidence="32">
    <location>
        <begin position="932"/>
        <end position="936"/>
    </location>
</feature>
<feature type="helix" evidence="33">
    <location>
        <begin position="945"/>
        <end position="961"/>
    </location>
</feature>
<feature type="helix" evidence="33">
    <location>
        <begin position="964"/>
        <end position="967"/>
    </location>
</feature>
<feature type="helix" evidence="33">
    <location>
        <begin position="973"/>
        <end position="995"/>
    </location>
</feature>
<feature type="helix" evidence="33">
    <location>
        <begin position="1006"/>
        <end position="1026"/>
    </location>
</feature>
<feature type="helix" evidence="33">
    <location>
        <begin position="1028"/>
        <end position="1035"/>
    </location>
</feature>
<feature type="strand" evidence="31">
    <location>
        <begin position="1039"/>
        <end position="1041"/>
    </location>
</feature>
<feature type="strand" evidence="31">
    <location>
        <begin position="1051"/>
        <end position="1053"/>
    </location>
</feature>
<feature type="helix" evidence="33">
    <location>
        <begin position="1059"/>
        <end position="1077"/>
    </location>
</feature>
<feature type="turn" evidence="33">
    <location>
        <begin position="1078"/>
        <end position="1082"/>
    </location>
</feature>
<feature type="turn" evidence="33">
    <location>
        <begin position="1087"/>
        <end position="1089"/>
    </location>
</feature>
<feature type="helix" evidence="33">
    <location>
        <begin position="1092"/>
        <end position="1118"/>
    </location>
</feature>
<feature type="helix" evidence="33">
    <location>
        <begin position="1123"/>
        <end position="1140"/>
    </location>
</feature>
<feature type="turn" evidence="33">
    <location>
        <begin position="1141"/>
        <end position="1143"/>
    </location>
</feature>
<feature type="helix" evidence="33">
    <location>
        <begin position="1145"/>
        <end position="1148"/>
    </location>
</feature>
<feature type="helix" evidence="30">
    <location>
        <begin position="1159"/>
        <end position="1187"/>
    </location>
</feature>
<feature type="strand" evidence="30">
    <location>
        <begin position="1192"/>
        <end position="1195"/>
    </location>
</feature>
<feature type="helix" evidence="30">
    <location>
        <begin position="1201"/>
        <end position="1218"/>
    </location>
</feature>
<feature type="helix" evidence="30">
    <location>
        <begin position="1224"/>
        <end position="1256"/>
    </location>
</feature>
<feature type="strand" evidence="33">
    <location>
        <begin position="1257"/>
        <end position="1260"/>
    </location>
</feature>
<feature type="helix" evidence="30">
    <location>
        <begin position="1263"/>
        <end position="1285"/>
    </location>
</feature>
<feature type="turn" evidence="30">
    <location>
        <begin position="1286"/>
        <end position="1290"/>
    </location>
</feature>
<feature type="helix" evidence="30">
    <location>
        <begin position="1293"/>
        <end position="1320"/>
    </location>
</feature>
<feature type="helix" evidence="30">
    <location>
        <begin position="1322"/>
        <end position="1337"/>
    </location>
</feature>
<feature type="helix" evidence="30">
    <location>
        <begin position="1353"/>
        <end position="1378"/>
    </location>
</feature>
<feature type="helix" evidence="30">
    <location>
        <begin position="1381"/>
        <end position="1402"/>
    </location>
</feature>
<feature type="strand" evidence="30">
    <location>
        <begin position="1454"/>
        <end position="1456"/>
    </location>
</feature>
<feature type="strand" evidence="31">
    <location>
        <begin position="1458"/>
        <end position="1461"/>
    </location>
</feature>
<feature type="helix" evidence="30">
    <location>
        <begin position="1472"/>
        <end position="1487"/>
    </location>
</feature>
<feature type="helix" evidence="30">
    <location>
        <begin position="1488"/>
        <end position="1490"/>
    </location>
</feature>
<feature type="helix" evidence="30">
    <location>
        <begin position="1495"/>
        <end position="1499"/>
    </location>
</feature>
<feature type="helix" evidence="30">
    <location>
        <begin position="1502"/>
        <end position="1513"/>
    </location>
</feature>
<feature type="turn" evidence="33">
    <location>
        <begin position="1516"/>
        <end position="1518"/>
    </location>
</feature>
<organism>
    <name type="scientific">Rattus norvegicus</name>
    <name type="common">Rat</name>
    <dbReference type="NCBI Taxonomy" id="10116"/>
    <lineage>
        <taxon>Eukaryota</taxon>
        <taxon>Metazoa</taxon>
        <taxon>Chordata</taxon>
        <taxon>Craniata</taxon>
        <taxon>Vertebrata</taxon>
        <taxon>Euteleostomi</taxon>
        <taxon>Mammalia</taxon>
        <taxon>Eutheria</taxon>
        <taxon>Euarchontoglires</taxon>
        <taxon>Glires</taxon>
        <taxon>Rodentia</taxon>
        <taxon>Myomorpha</taxon>
        <taxon>Muroidea</taxon>
        <taxon>Muridae</taxon>
        <taxon>Murinae</taxon>
        <taxon>Rattus</taxon>
    </lineage>
</organism>
<dbReference type="EMBL" id="U24070">
    <property type="protein sequence ID" value="AAC52266.1"/>
    <property type="molecule type" value="mRNA"/>
</dbReference>
<dbReference type="PIR" id="A57607">
    <property type="entry name" value="A57607"/>
</dbReference>
<dbReference type="RefSeq" id="NP_074052.1">
    <property type="nucleotide sequence ID" value="NM_022861.1"/>
</dbReference>
<dbReference type="PDB" id="1Y8F">
    <property type="method" value="NMR"/>
    <property type="chains" value="A=567-616"/>
</dbReference>
<dbReference type="PDB" id="2CJS">
    <property type="method" value="X-ray"/>
    <property type="resolution" value="1.78 A"/>
    <property type="chains" value="A/B=2-150"/>
</dbReference>
<dbReference type="PDB" id="2CJT">
    <property type="method" value="X-ray"/>
    <property type="resolution" value="1.44 A"/>
    <property type="chains" value="A/B/C/D=1-128"/>
</dbReference>
<dbReference type="PDB" id="2KDU">
    <property type="method" value="NMR"/>
    <property type="chains" value="B=458-492"/>
</dbReference>
<dbReference type="PDB" id="3SWH">
    <property type="method" value="X-ray"/>
    <property type="resolution" value="2.65 A"/>
    <property type="chains" value="A/B=1148-1407, A/B=1453-1531"/>
</dbReference>
<dbReference type="PDB" id="4Y21">
    <property type="method" value="X-ray"/>
    <property type="resolution" value="2.90 A"/>
    <property type="chains" value="A=942-1407, A=1453-1523"/>
</dbReference>
<dbReference type="PDB" id="5UE8">
    <property type="method" value="X-ray"/>
    <property type="resolution" value="3.35 A"/>
    <property type="chains" value="A/B=529-1407, A/B=1452-1531"/>
</dbReference>
<dbReference type="PDB" id="5UF7">
    <property type="method" value="X-ray"/>
    <property type="resolution" value="2.90 A"/>
    <property type="chains" value="A=942-1407, A=1453-1531"/>
</dbReference>
<dbReference type="PDB" id="6A30">
    <property type="method" value="X-ray"/>
    <property type="resolution" value="2.79 A"/>
    <property type="chains" value="A=944-1407, A=1453-1523"/>
</dbReference>
<dbReference type="PDB" id="6NYC">
    <property type="method" value="X-ray"/>
    <property type="resolution" value="1.89 A"/>
    <property type="chains" value="A=675-820"/>
</dbReference>
<dbReference type="PDB" id="6NYT">
    <property type="method" value="X-ray"/>
    <property type="resolution" value="1.37 A"/>
    <property type="chains" value="A=675-820"/>
</dbReference>
<dbReference type="PDB" id="7T7X">
    <property type="method" value="EM"/>
    <property type="resolution" value="10.00 A"/>
    <property type="chains" value="A=529-755, A=1401-1407, A=1452-1665"/>
</dbReference>
<dbReference type="PDB" id="7T81">
    <property type="method" value="EM"/>
    <property type="resolution" value="10.00 A"/>
    <property type="chains" value="A/C/D/E/F/G/H/I/J/K/L/M/N/O/P/Q/R/S/T/U/V/W/X/Y=529-755, A/C/D/E/F/G/H/I/J/K/L/M/N/O/P/Q/R/S/T/U/V/W/X/Y=1401-1407, A/C/D/E/F/G/H/I/J/K/L/M/N/O/P/Q/R/S/T/U/V/W/X/Y=1452-1665"/>
</dbReference>
<dbReference type="PDBsum" id="1Y8F"/>
<dbReference type="PDBsum" id="2CJS"/>
<dbReference type="PDBsum" id="2CJT"/>
<dbReference type="PDBsum" id="2KDU"/>
<dbReference type="PDBsum" id="3SWH"/>
<dbReference type="PDBsum" id="4Y21"/>
<dbReference type="PDBsum" id="5UE8"/>
<dbReference type="PDBsum" id="5UF7"/>
<dbReference type="PDBsum" id="6A30"/>
<dbReference type="PDBsum" id="6NYC"/>
<dbReference type="PDBsum" id="6NYT"/>
<dbReference type="PDBsum" id="7T7X"/>
<dbReference type="PDBsum" id="7T81"/>
<dbReference type="BMRB" id="Q62768"/>
<dbReference type="SMR" id="Q62768"/>
<dbReference type="BioGRID" id="249207">
    <property type="interactions" value="1"/>
</dbReference>
<dbReference type="CORUM" id="Q62768"/>
<dbReference type="DIP" id="DIP-29191N"/>
<dbReference type="FunCoup" id="Q62768">
    <property type="interactions" value="1301"/>
</dbReference>
<dbReference type="IntAct" id="Q62768">
    <property type="interactions" value="3"/>
</dbReference>
<dbReference type="STRING" id="10116.ENSRNOP00000025162"/>
<dbReference type="CarbonylDB" id="Q62768"/>
<dbReference type="iPTMnet" id="Q62768"/>
<dbReference type="PhosphoSitePlus" id="Q62768"/>
<dbReference type="SwissPalm" id="Q62768"/>
<dbReference type="GeneID" id="64829"/>
<dbReference type="KEGG" id="rno:64829"/>
<dbReference type="AGR" id="RGD:619722"/>
<dbReference type="CTD" id="23025"/>
<dbReference type="RGD" id="619722">
    <property type="gene designation" value="Unc13a"/>
</dbReference>
<dbReference type="eggNOG" id="KOG1011">
    <property type="taxonomic scope" value="Eukaryota"/>
</dbReference>
<dbReference type="InParanoid" id="Q62768"/>
<dbReference type="PhylomeDB" id="Q62768"/>
<dbReference type="EvolutionaryTrace" id="Q62768"/>
<dbReference type="PRO" id="PR:Q62768"/>
<dbReference type="Proteomes" id="UP000002494">
    <property type="component" value="Unplaced"/>
</dbReference>
<dbReference type="GO" id="GO:0030424">
    <property type="term" value="C:axon"/>
    <property type="evidence" value="ECO:0000266"/>
    <property type="project" value="RGD"/>
</dbReference>
<dbReference type="GO" id="GO:0044305">
    <property type="term" value="C:calyx of Held"/>
    <property type="evidence" value="ECO:0000266"/>
    <property type="project" value="RGD"/>
</dbReference>
<dbReference type="GO" id="GO:0060076">
    <property type="term" value="C:excitatory synapse"/>
    <property type="evidence" value="ECO:0000314"/>
    <property type="project" value="BHF-UCL"/>
</dbReference>
<dbReference type="GO" id="GO:0098978">
    <property type="term" value="C:glutamatergic synapse"/>
    <property type="evidence" value="ECO:0000266"/>
    <property type="project" value="RGD"/>
</dbReference>
<dbReference type="GO" id="GO:0005798">
    <property type="term" value="C:Golgi-associated vesicle"/>
    <property type="evidence" value="ECO:0000314"/>
    <property type="project" value="UniProtKB"/>
</dbReference>
<dbReference type="GO" id="GO:0031594">
    <property type="term" value="C:neuromuscular junction"/>
    <property type="evidence" value="ECO:0000266"/>
    <property type="project" value="RGD"/>
</dbReference>
<dbReference type="GO" id="GO:0005886">
    <property type="term" value="C:plasma membrane"/>
    <property type="evidence" value="ECO:0000318"/>
    <property type="project" value="GO_Central"/>
</dbReference>
<dbReference type="GO" id="GO:0098793">
    <property type="term" value="C:presynapse"/>
    <property type="evidence" value="ECO:0000266"/>
    <property type="project" value="RGD"/>
</dbReference>
<dbReference type="GO" id="GO:0048786">
    <property type="term" value="C:presynaptic active zone"/>
    <property type="evidence" value="ECO:0000314"/>
    <property type="project" value="UniProtKB"/>
</dbReference>
<dbReference type="GO" id="GO:0042734">
    <property type="term" value="C:presynaptic membrane"/>
    <property type="evidence" value="ECO:0000314"/>
    <property type="project" value="RGD"/>
</dbReference>
<dbReference type="GO" id="GO:0032991">
    <property type="term" value="C:protein-containing complex"/>
    <property type="evidence" value="ECO:0000314"/>
    <property type="project" value="RGD"/>
</dbReference>
<dbReference type="GO" id="GO:0045202">
    <property type="term" value="C:synapse"/>
    <property type="evidence" value="ECO:0000266"/>
    <property type="project" value="RGD"/>
</dbReference>
<dbReference type="GO" id="GO:0097060">
    <property type="term" value="C:synaptic membrane"/>
    <property type="evidence" value="ECO:0000314"/>
    <property type="project" value="ParkinsonsUK-UCL"/>
</dbReference>
<dbReference type="GO" id="GO:0030672">
    <property type="term" value="C:synaptic vesicle membrane"/>
    <property type="evidence" value="ECO:0000318"/>
    <property type="project" value="GO_Central"/>
</dbReference>
<dbReference type="GO" id="GO:0043195">
    <property type="term" value="C:terminal bouton"/>
    <property type="evidence" value="ECO:0007005"/>
    <property type="project" value="ParkinsonsUK-UCL"/>
</dbReference>
<dbReference type="GO" id="GO:0005509">
    <property type="term" value="F:calcium ion binding"/>
    <property type="evidence" value="ECO:0007669"/>
    <property type="project" value="InterPro"/>
</dbReference>
<dbReference type="GO" id="GO:0005516">
    <property type="term" value="F:calmodulin binding"/>
    <property type="evidence" value="ECO:0000314"/>
    <property type="project" value="ParkinsonsUK-UCL"/>
</dbReference>
<dbReference type="GO" id="GO:0019992">
    <property type="term" value="F:diacylglycerol binding"/>
    <property type="evidence" value="ECO:0000266"/>
    <property type="project" value="RGD"/>
</dbReference>
<dbReference type="GO" id="GO:0042802">
    <property type="term" value="F:identical protein binding"/>
    <property type="evidence" value="ECO:0000353"/>
    <property type="project" value="IntAct"/>
</dbReference>
<dbReference type="GO" id="GO:0005543">
    <property type="term" value="F:phospholipid binding"/>
    <property type="evidence" value="ECO:0007669"/>
    <property type="project" value="InterPro"/>
</dbReference>
<dbReference type="GO" id="GO:0019904">
    <property type="term" value="F:protein domain specific binding"/>
    <property type="evidence" value="ECO:0000314"/>
    <property type="project" value="RGD"/>
</dbReference>
<dbReference type="GO" id="GO:0044877">
    <property type="term" value="F:protein-containing complex binding"/>
    <property type="evidence" value="ECO:0000314"/>
    <property type="project" value="RGD"/>
</dbReference>
<dbReference type="GO" id="GO:0000149">
    <property type="term" value="F:SNARE binding"/>
    <property type="evidence" value="ECO:0000314"/>
    <property type="project" value="RGD"/>
</dbReference>
<dbReference type="GO" id="GO:0030507">
    <property type="term" value="F:spectrin binding"/>
    <property type="evidence" value="ECO:0000353"/>
    <property type="project" value="RGD"/>
</dbReference>
<dbReference type="GO" id="GO:0019905">
    <property type="term" value="F:syntaxin binding"/>
    <property type="evidence" value="ECO:0000314"/>
    <property type="project" value="ParkinsonsUK-UCL"/>
</dbReference>
<dbReference type="GO" id="GO:0017075">
    <property type="term" value="F:syntaxin-1 binding"/>
    <property type="evidence" value="ECO:0000314"/>
    <property type="project" value="ParkinsonsUK-UCL"/>
</dbReference>
<dbReference type="GO" id="GO:0008270">
    <property type="term" value="F:zinc ion binding"/>
    <property type="evidence" value="ECO:0007669"/>
    <property type="project" value="UniProtKB-KW"/>
</dbReference>
<dbReference type="GO" id="GO:0050435">
    <property type="term" value="P:amyloid-beta metabolic process"/>
    <property type="evidence" value="ECO:0000266"/>
    <property type="project" value="RGD"/>
</dbReference>
<dbReference type="GO" id="GO:0030154">
    <property type="term" value="P:cell differentiation"/>
    <property type="evidence" value="ECO:0007669"/>
    <property type="project" value="UniProtKB-KW"/>
</dbReference>
<dbReference type="GO" id="GO:0061789">
    <property type="term" value="P:dense core granule priming"/>
    <property type="evidence" value="ECO:0000316"/>
    <property type="project" value="SynGO-UCL"/>
</dbReference>
<dbReference type="GO" id="GO:0060384">
    <property type="term" value="P:innervation"/>
    <property type="evidence" value="ECO:0000266"/>
    <property type="project" value="RGD"/>
</dbReference>
<dbReference type="GO" id="GO:0060291">
    <property type="term" value="P:long-term synaptic potentiation"/>
    <property type="evidence" value="ECO:0000315"/>
    <property type="project" value="RGD"/>
</dbReference>
<dbReference type="GO" id="GO:0007528">
    <property type="term" value="P:neuromuscular junction development"/>
    <property type="evidence" value="ECO:0000266"/>
    <property type="project" value="RGD"/>
</dbReference>
<dbReference type="GO" id="GO:0099011">
    <property type="term" value="P:neuronal dense core vesicle exocytosis"/>
    <property type="evidence" value="ECO:0000250"/>
    <property type="project" value="UniProtKB"/>
</dbReference>
<dbReference type="GO" id="GO:0007269">
    <property type="term" value="P:neurotransmitter secretion"/>
    <property type="evidence" value="ECO:0000314"/>
    <property type="project" value="RGD"/>
</dbReference>
<dbReference type="GO" id="GO:1903861">
    <property type="term" value="P:positive regulation of dendrite extension"/>
    <property type="evidence" value="ECO:0000266"/>
    <property type="project" value="RGD"/>
</dbReference>
<dbReference type="GO" id="GO:1900451">
    <property type="term" value="P:positive regulation of glutamate receptor signaling pathway"/>
    <property type="evidence" value="ECO:0000266"/>
    <property type="project" value="RGD"/>
</dbReference>
<dbReference type="GO" id="GO:0001956">
    <property type="term" value="P:positive regulation of neurotransmitter secretion"/>
    <property type="evidence" value="ECO:0000266"/>
    <property type="project" value="RGD"/>
</dbReference>
<dbReference type="GO" id="GO:0031915">
    <property type="term" value="P:positive regulation of synaptic plasticity"/>
    <property type="evidence" value="ECO:0000266"/>
    <property type="project" value="RGD"/>
</dbReference>
<dbReference type="GO" id="GO:1902991">
    <property type="term" value="P:regulation of amyloid precursor protein catabolic process"/>
    <property type="evidence" value="ECO:0000266"/>
    <property type="project" value="RGD"/>
</dbReference>
<dbReference type="GO" id="GO:0048172">
    <property type="term" value="P:regulation of short-term neuronal synaptic plasticity"/>
    <property type="evidence" value="ECO:0000266"/>
    <property type="project" value="RGD"/>
</dbReference>
<dbReference type="GO" id="GO:0010807">
    <property type="term" value="P:regulation of synaptic vesicle priming"/>
    <property type="evidence" value="ECO:0000314"/>
    <property type="project" value="UniProtKB"/>
</dbReference>
<dbReference type="GO" id="GO:0035249">
    <property type="term" value="P:synaptic transmission, glutamatergic"/>
    <property type="evidence" value="ECO:0000266"/>
    <property type="project" value="RGD"/>
</dbReference>
<dbReference type="GO" id="GO:0016081">
    <property type="term" value="P:synaptic vesicle docking"/>
    <property type="evidence" value="ECO:0000266"/>
    <property type="project" value="RGD"/>
</dbReference>
<dbReference type="GO" id="GO:0016079">
    <property type="term" value="P:synaptic vesicle exocytosis"/>
    <property type="evidence" value="ECO:0000266"/>
    <property type="project" value="RGD"/>
</dbReference>
<dbReference type="GO" id="GO:0016188">
    <property type="term" value="P:synaptic vesicle maturation"/>
    <property type="evidence" value="ECO:0000266"/>
    <property type="project" value="RGD"/>
</dbReference>
<dbReference type="GO" id="GO:0016082">
    <property type="term" value="P:synaptic vesicle priming"/>
    <property type="evidence" value="ECO:0000314"/>
    <property type="project" value="RGD"/>
</dbReference>
<dbReference type="CDD" id="cd20859">
    <property type="entry name" value="C1_Munc13-2-like"/>
    <property type="match status" value="1"/>
</dbReference>
<dbReference type="CDD" id="cd08394">
    <property type="entry name" value="C2A_Munc13"/>
    <property type="match status" value="1"/>
</dbReference>
<dbReference type="CDD" id="cd04027">
    <property type="entry name" value="C2B_Munc13"/>
    <property type="match status" value="1"/>
</dbReference>
<dbReference type="CDD" id="cd08395">
    <property type="entry name" value="C2C_Munc13"/>
    <property type="match status" value="1"/>
</dbReference>
<dbReference type="FunFam" id="1.10.357.50:FF:000001">
    <property type="entry name" value="Protein unc-13 homolog B"/>
    <property type="match status" value="1"/>
</dbReference>
<dbReference type="FunFam" id="1.20.58.1100:FF:000001">
    <property type="entry name" value="Protein unc-13 homolog B"/>
    <property type="match status" value="1"/>
</dbReference>
<dbReference type="FunFam" id="2.60.40.150:FF:000002">
    <property type="entry name" value="Protein unc-13 homolog B"/>
    <property type="match status" value="1"/>
</dbReference>
<dbReference type="FunFam" id="2.60.40.150:FF:000031">
    <property type="entry name" value="Protein unc-13 homolog B"/>
    <property type="match status" value="1"/>
</dbReference>
<dbReference type="FunFam" id="3.30.60.20:FF:000001">
    <property type="entry name" value="Protein unc-13 homolog B"/>
    <property type="match status" value="1"/>
</dbReference>
<dbReference type="FunFam" id="2.60.40.150:FF:000014">
    <property type="entry name" value="protein unc-13 homolog B"/>
    <property type="match status" value="1"/>
</dbReference>
<dbReference type="Gene3D" id="1.10.357.50">
    <property type="match status" value="1"/>
</dbReference>
<dbReference type="Gene3D" id="1.20.58.1100">
    <property type="match status" value="1"/>
</dbReference>
<dbReference type="Gene3D" id="3.30.60.20">
    <property type="match status" value="1"/>
</dbReference>
<dbReference type="Gene3D" id="2.60.40.150">
    <property type="entry name" value="C2 domain"/>
    <property type="match status" value="3"/>
</dbReference>
<dbReference type="InterPro" id="IPR046349">
    <property type="entry name" value="C1-like_sf"/>
</dbReference>
<dbReference type="InterPro" id="IPR000008">
    <property type="entry name" value="C2_dom"/>
</dbReference>
<dbReference type="InterPro" id="IPR035892">
    <property type="entry name" value="C2_domain_sf"/>
</dbReference>
<dbReference type="InterPro" id="IPR010439">
    <property type="entry name" value="MUN_dom"/>
</dbReference>
<dbReference type="InterPro" id="IPR014770">
    <property type="entry name" value="Munc13_1"/>
</dbReference>
<dbReference type="InterPro" id="IPR014772">
    <property type="entry name" value="Munc13_dom-2"/>
</dbReference>
<dbReference type="InterPro" id="IPR002219">
    <property type="entry name" value="PE/DAG-bd"/>
</dbReference>
<dbReference type="InterPro" id="IPR027080">
    <property type="entry name" value="Unc-13"/>
</dbReference>
<dbReference type="InterPro" id="IPR037302">
    <property type="entry name" value="Unc-13_C2B"/>
</dbReference>
<dbReference type="PANTHER" id="PTHR10480">
    <property type="entry name" value="PROTEIN UNC-13 HOMOLOG"/>
    <property type="match status" value="1"/>
</dbReference>
<dbReference type="PANTHER" id="PTHR10480:SF1">
    <property type="entry name" value="PROTEIN UNC-13 HOMOLOG A"/>
    <property type="match status" value="1"/>
</dbReference>
<dbReference type="Pfam" id="PF00130">
    <property type="entry name" value="C1_1"/>
    <property type="match status" value="1"/>
</dbReference>
<dbReference type="Pfam" id="PF00168">
    <property type="entry name" value="C2"/>
    <property type="match status" value="3"/>
</dbReference>
<dbReference type="Pfam" id="PF06292">
    <property type="entry name" value="MUN"/>
    <property type="match status" value="1"/>
</dbReference>
<dbReference type="SMART" id="SM00109">
    <property type="entry name" value="C1"/>
    <property type="match status" value="1"/>
</dbReference>
<dbReference type="SMART" id="SM00239">
    <property type="entry name" value="C2"/>
    <property type="match status" value="3"/>
</dbReference>
<dbReference type="SMART" id="SM01145">
    <property type="entry name" value="DUF1041"/>
    <property type="match status" value="1"/>
</dbReference>
<dbReference type="SUPFAM" id="SSF49562">
    <property type="entry name" value="C2 domain (Calcium/lipid-binding domain, CaLB)"/>
    <property type="match status" value="3"/>
</dbReference>
<dbReference type="SUPFAM" id="SSF57889">
    <property type="entry name" value="Cysteine-rich domain"/>
    <property type="match status" value="1"/>
</dbReference>
<dbReference type="PROSITE" id="PS50004">
    <property type="entry name" value="C2"/>
    <property type="match status" value="3"/>
</dbReference>
<dbReference type="PROSITE" id="PS51258">
    <property type="entry name" value="MHD1"/>
    <property type="match status" value="1"/>
</dbReference>
<dbReference type="PROSITE" id="PS51259">
    <property type="entry name" value="MHD2"/>
    <property type="match status" value="1"/>
</dbReference>
<dbReference type="PROSITE" id="PS00479">
    <property type="entry name" value="ZF_DAG_PE_1"/>
    <property type="match status" value="1"/>
</dbReference>
<dbReference type="PROSITE" id="PS50081">
    <property type="entry name" value="ZF_DAG_PE_2"/>
    <property type="match status" value="1"/>
</dbReference>
<comment type="function">
    <text evidence="1 2 9 10 21">Plays a role in vesicle maturation during exocytosis as a target of the diacylglycerol second messenger pathway. Involved in neurotransmitter release by acting in synaptic vesicle priming prior to vesicle fusion and participates in the activity-dependent refilling of readily releasable vesicle pool (RRP). Essential for synaptic vesicle maturation in most excitatory/glutamatergic but not inhibitory/GABA-mediated synapses. Facilitates neuronal dense core vesicles fusion as well as controls the location and efficiency of their synaptic release (By similarity). Also involved in secretory granule priming in insulin secretion. Plays a role in dendrite formation by melanocytes (By similarity).</text>
</comment>
<comment type="cofactor">
    <cofactor evidence="4">
        <name>Ca(2+)</name>
        <dbReference type="ChEBI" id="CHEBI:29108"/>
    </cofactor>
</comment>
<comment type="subunit">
    <text evidence="1 9 11 13 14 16 17 19 20 22">Interacts with the N-termini of STX1A and/or STX1B1 and DOC2A (PubMed:8999968, PubMed:9195900, PubMed:9736751). Interacts with BSN (PubMed:12163476, PubMed:14734538). Interacts with RIMS1 which recruits UNC13A to the active zone (PubMed:11343654, PubMed:16704978). Forms homodimers via its first C2 domain. Also interacts via this domain with the zinc finger domain of RIMS2 (PubMed:16052212, PubMed:16732694). Part of a complex consisting of ERC2, RIMS1 and UNC13A (PubMed:12163476). Also part of a complex consisting of UNC13A, RIMS2 and RAB3A. Interacts with FBXO45 (via SRY domain); leading to the degradation of UNC13A by the proteasome (By similarity).</text>
</comment>
<comment type="interaction">
    <interactant intactId="EBI-15584670">
        <id>Q62768</id>
    </interactant>
    <interactant intactId="EBI-6972631">
        <id>Q9JIS1</id>
        <label>Rims2</label>
    </interactant>
    <organismsDiffer>false</organismsDiffer>
    <experiments>4</experiments>
</comment>
<comment type="interaction">
    <interactant intactId="EBI-15584670">
        <id>Q62768</id>
    </interactant>
    <interactant intactId="EBI-15584670">
        <id>Q62768</id>
        <label>Unc13a</label>
    </interactant>
    <organismsDiffer>false</organismsDiffer>
    <experiments>4</experiments>
</comment>
<comment type="subcellular location">
    <subcellularLocation>
        <location>Cytoplasm</location>
    </subcellularLocation>
    <subcellularLocation>
        <location>Cell membrane</location>
        <topology>Peripheral membrane protein</topology>
    </subcellularLocation>
    <subcellularLocation>
        <location evidence="18">Presynaptic cell membrane</location>
        <topology>Peripheral membrane protein</topology>
    </subcellularLocation>
    <subcellularLocation>
        <location evidence="18">Presynaptic active zone</location>
    </subcellularLocation>
    <text>Translocated to the plasma membrane in response to phorbol ester binding.</text>
</comment>
<comment type="alternative products">
    <event type="alternative splicing"/>
    <isoform>
        <id>Q62768-1</id>
        <name>1</name>
        <sequence type="displayed"/>
    </isoform>
    <isoform>
        <id>Q62768-2</id>
        <name>2</name>
        <sequence type="described" ref="VSP_011382"/>
    </isoform>
    <isoform>
        <id>Q62768-3</id>
        <name>3</name>
        <sequence type="described" ref="VSP_011383"/>
    </isoform>
</comment>
<comment type="tissue specificity">
    <text evidence="12 18 23">Expressed in brain, with highest levels in the olfactory bulb, striatum, cerebral cortex, hippocampus and cerebellum. Also expressed in pancreatic islet cells.</text>
</comment>
<comment type="developmental stage">
    <text evidence="23">First detected at birth, after which expression level is steadily increasing until it reaches a plateau at P15.</text>
</comment>
<comment type="domain">
    <text evidence="15">The C2 domains are not involved in calcium-dependent phospholipid binding.</text>
</comment>
<comment type="domain">
    <text evidence="15">The C-terminal region containing both MHD domains and the third C2 domain is required for synaptic vesicle priming activity.</text>
</comment>
<comment type="similarity">
    <text evidence="24">Belongs to the unc-13 family.</text>
</comment>
<accession>Q62768</accession>